<comment type="function">
    <text evidence="1">Multifunctional serine/threonine kinase that plays a role in several processes including egress of virus particles from the nucleus, modulation of the actin cytoskeleton and inhibition of apoptosis. Phosphorylates UL31 and UL34 homologs, two critical regulators of capsid budding from nucleus to endoplasmic reticulum, thereby facilitating virion egress. Modulates and redistributes host components of the nuclear envelope, including LMNA, emerin/EMD and the nuclear matrix protein MATR3. Phosphorylates envelope glycoprotein B (gB), probably to direct it to the cell surface. Promotes virus intracellular spread by restructuring host cell cytoskeleton. Blocks host apoptosis to extend cell survival and allow efficient viral replication. Promotes viral gene expression by phosphorylating host HDAC2 to reduce viral genome silencing (By similarity).</text>
</comment>
<comment type="catalytic activity">
    <reaction>
        <text>L-seryl-[protein] + ATP = O-phospho-L-seryl-[protein] + ADP + H(+)</text>
        <dbReference type="Rhea" id="RHEA:17989"/>
        <dbReference type="Rhea" id="RHEA-COMP:9863"/>
        <dbReference type="Rhea" id="RHEA-COMP:11604"/>
        <dbReference type="ChEBI" id="CHEBI:15378"/>
        <dbReference type="ChEBI" id="CHEBI:29999"/>
        <dbReference type="ChEBI" id="CHEBI:30616"/>
        <dbReference type="ChEBI" id="CHEBI:83421"/>
        <dbReference type="ChEBI" id="CHEBI:456216"/>
        <dbReference type="EC" id="2.7.11.1"/>
    </reaction>
</comment>
<comment type="catalytic activity">
    <reaction>
        <text>L-threonyl-[protein] + ATP = O-phospho-L-threonyl-[protein] + ADP + H(+)</text>
        <dbReference type="Rhea" id="RHEA:46608"/>
        <dbReference type="Rhea" id="RHEA-COMP:11060"/>
        <dbReference type="Rhea" id="RHEA-COMP:11605"/>
        <dbReference type="ChEBI" id="CHEBI:15378"/>
        <dbReference type="ChEBI" id="CHEBI:30013"/>
        <dbReference type="ChEBI" id="CHEBI:30616"/>
        <dbReference type="ChEBI" id="CHEBI:61977"/>
        <dbReference type="ChEBI" id="CHEBI:456216"/>
        <dbReference type="EC" id="2.7.11.1"/>
    </reaction>
</comment>
<comment type="subcellular location">
    <subcellularLocation>
        <location evidence="1">Host cytoplasm</location>
    </subcellularLocation>
    <subcellularLocation>
        <location evidence="1">Host nucleus</location>
    </subcellularLocation>
</comment>
<comment type="PTM">
    <text evidence="1">Phosphorylated by UL13 homolog; this phosphorylation regulates subsequent phosphorylation of UL31 and UL34 homologs by US3. Autophosphorylated (By similarity).</text>
</comment>
<comment type="similarity">
    <text evidence="2">Belongs to the protein kinase superfamily. Ser/Thr protein kinase family.</text>
</comment>
<dbReference type="EC" id="2.7.11.1"/>
<dbReference type="EMBL" id="L07067">
    <property type="protein sequence ID" value="AAA47887.1"/>
    <property type="molecule type" value="Genomic_DNA"/>
</dbReference>
<dbReference type="PIR" id="B46113">
    <property type="entry name" value="B46113"/>
</dbReference>
<dbReference type="SMR" id="Q04543"/>
<dbReference type="GO" id="GO:0030430">
    <property type="term" value="C:host cell cytoplasm"/>
    <property type="evidence" value="ECO:0007669"/>
    <property type="project" value="UniProtKB-SubCell"/>
</dbReference>
<dbReference type="GO" id="GO:0042025">
    <property type="term" value="C:host cell nucleus"/>
    <property type="evidence" value="ECO:0007669"/>
    <property type="project" value="UniProtKB-SubCell"/>
</dbReference>
<dbReference type="GO" id="GO:0005524">
    <property type="term" value="F:ATP binding"/>
    <property type="evidence" value="ECO:0007669"/>
    <property type="project" value="UniProtKB-KW"/>
</dbReference>
<dbReference type="GO" id="GO:0106310">
    <property type="term" value="F:protein serine kinase activity"/>
    <property type="evidence" value="ECO:0007669"/>
    <property type="project" value="RHEA"/>
</dbReference>
<dbReference type="GO" id="GO:0004674">
    <property type="term" value="F:protein serine/threonine kinase activity"/>
    <property type="evidence" value="ECO:0007669"/>
    <property type="project" value="UniProtKB-KW"/>
</dbReference>
<dbReference type="GO" id="GO:0052150">
    <property type="term" value="P:symbiont-mediated perturbation of host apoptosis"/>
    <property type="evidence" value="ECO:0007669"/>
    <property type="project" value="UniProtKB-KW"/>
</dbReference>
<dbReference type="GO" id="GO:0039525">
    <property type="term" value="P:symbiont-mediated perturbation of host chromatin organization"/>
    <property type="evidence" value="ECO:0007669"/>
    <property type="project" value="UniProtKB-KW"/>
</dbReference>
<dbReference type="CDD" id="cd00180">
    <property type="entry name" value="PKc"/>
    <property type="match status" value="1"/>
</dbReference>
<dbReference type="Gene3D" id="3.30.200.20">
    <property type="entry name" value="Phosphorylase Kinase, domain 1"/>
    <property type="match status" value="1"/>
</dbReference>
<dbReference type="Gene3D" id="1.10.510.10">
    <property type="entry name" value="Transferase(Phosphotransferase) domain 1"/>
    <property type="match status" value="1"/>
</dbReference>
<dbReference type="InterPro" id="IPR011009">
    <property type="entry name" value="Kinase-like_dom_sf"/>
</dbReference>
<dbReference type="InterPro" id="IPR050660">
    <property type="entry name" value="NEK_Ser/Thr_kinase"/>
</dbReference>
<dbReference type="InterPro" id="IPR000719">
    <property type="entry name" value="Prot_kinase_dom"/>
</dbReference>
<dbReference type="InterPro" id="IPR008271">
    <property type="entry name" value="Ser/Thr_kinase_AS"/>
</dbReference>
<dbReference type="PANTHER" id="PTHR43671:SF103">
    <property type="entry name" value="KINASE, PUTATIVE-RELATED"/>
    <property type="match status" value="1"/>
</dbReference>
<dbReference type="PANTHER" id="PTHR43671">
    <property type="entry name" value="SERINE/THREONINE-PROTEIN KINASE NEK"/>
    <property type="match status" value="1"/>
</dbReference>
<dbReference type="Pfam" id="PF00069">
    <property type="entry name" value="Pkinase"/>
    <property type="match status" value="1"/>
</dbReference>
<dbReference type="SMART" id="SM00220">
    <property type="entry name" value="S_TKc"/>
    <property type="match status" value="1"/>
</dbReference>
<dbReference type="SUPFAM" id="SSF56112">
    <property type="entry name" value="Protein kinase-like (PK-like)"/>
    <property type="match status" value="1"/>
</dbReference>
<dbReference type="PROSITE" id="PS50011">
    <property type="entry name" value="PROTEIN_KINASE_DOM"/>
    <property type="match status" value="1"/>
</dbReference>
<dbReference type="PROSITE" id="PS00108">
    <property type="entry name" value="PROTEIN_KINASE_ST"/>
    <property type="match status" value="1"/>
</dbReference>
<gene>
    <name type="primary">US2</name>
</gene>
<feature type="chain" id="PRO_0000086176" description="Serine/threonine-protein kinase US3 homolog">
    <location>
        <begin position="1"/>
        <end position="345"/>
    </location>
</feature>
<feature type="domain" description="Protein kinase" evidence="2">
    <location>
        <begin position="49"/>
        <end position="334"/>
    </location>
</feature>
<feature type="active site" description="Proton acceptor" evidence="2 3">
    <location>
        <position position="162"/>
    </location>
</feature>
<feature type="binding site" evidence="2">
    <location>
        <begin position="55"/>
        <end position="63"/>
    </location>
    <ligand>
        <name>ATP</name>
        <dbReference type="ChEBI" id="CHEBI:30616"/>
    </ligand>
</feature>
<feature type="binding site" evidence="2">
    <location>
        <position position="78"/>
    </location>
    <ligand>
        <name>ATP</name>
        <dbReference type="ChEBI" id="CHEBI:30616"/>
    </ligand>
</feature>
<sequence length="345" mass="38954">MNYDDDCLYEDKHMDTDIYDMLADEDTSDVDNTLAVCATARAGIEKAGFSVLETFTPGAEGFTFACIENKTRENVVIKAGQRGGTVTEAHILRNINHPVIIRLMGTFTYNSFTCLVLPRYKTDLYCYLSDRRRIAICDMLSIERSVLRAIQYLHENRIIHRDVKAENIFINHPGDVCLGDFGAACYPVDITQNKYYGWAGTIATNAPELLARDPYGPAVDIWSAGIVLFEMATCHDSLFEKDGLDGDCDSDRQIKLIIRRTGVHPSEFPIDAQATLDEIYRTCQKTSRKPGTRPTWTNLYELPLELEYLICKMLAFDAHKRPSAKALLDFAAFYDIPDPYPNPTN</sequence>
<protein>
    <recommendedName>
        <fullName>Serine/threonine-protein kinase US3 homolog</fullName>
        <ecNumber>2.7.11.1</ecNumber>
    </recommendedName>
</protein>
<organismHost>
    <name type="scientific">Chlorocebus aethiops</name>
    <name type="common">Green monkey</name>
    <name type="synonym">Cercopithecus aethiops</name>
    <dbReference type="NCBI Taxonomy" id="9534"/>
</organismHost>
<reference key="1">
    <citation type="journal article" date="1993" name="Virology">
        <title>DNA sequence and genetic organization of the unique short (US) region of the simian varicella virus genome.</title>
        <authorList>
            <person name="Fletcher T.M. III"/>
            <person name="Gray W.L."/>
        </authorList>
    </citation>
    <scope>NUCLEOTIDE SEQUENCE [GENOMIC DNA]</scope>
</reference>
<name>US03_CHV9D</name>
<organism>
    <name type="scientific">Cercopithecine herpesvirus 9 (strain DHV)</name>
    <name type="common">CeHV-9</name>
    <name type="synonym">Simian varicella virus</name>
    <dbReference type="NCBI Taxonomy" id="36348"/>
    <lineage>
        <taxon>Viruses</taxon>
        <taxon>Duplodnaviria</taxon>
        <taxon>Heunggongvirae</taxon>
        <taxon>Peploviricota</taxon>
        <taxon>Herviviricetes</taxon>
        <taxon>Herpesvirales</taxon>
        <taxon>Orthoherpesviridae</taxon>
        <taxon>Alphaherpesvirinae</taxon>
        <taxon>Varicellovirus</taxon>
        <taxon>Varicellovirus cercopithecinealpha9</taxon>
    </lineage>
</organism>
<proteinExistence type="inferred from homology"/>
<keyword id="KW-0067">ATP-binding</keyword>
<keyword id="KW-1035">Host cytoplasm</keyword>
<keyword id="KW-1048">Host nucleus</keyword>
<keyword id="KW-0945">Host-virus interaction</keyword>
<keyword id="KW-0418">Kinase</keyword>
<keyword id="KW-1119">Modulation of host cell apoptosis by virus</keyword>
<keyword id="KW-1122">Modulation of host chromatin by virus</keyword>
<keyword id="KW-0547">Nucleotide-binding</keyword>
<keyword id="KW-0723">Serine/threonine-protein kinase</keyword>
<keyword id="KW-0808">Transferase</keyword>
<evidence type="ECO:0000250" key="1"/>
<evidence type="ECO:0000255" key="2">
    <source>
        <dbReference type="PROSITE-ProRule" id="PRU00159"/>
    </source>
</evidence>
<evidence type="ECO:0000255" key="3">
    <source>
        <dbReference type="PROSITE-ProRule" id="PRU10027"/>
    </source>
</evidence>
<accession>Q04543</accession>